<comment type="function">
    <text evidence="1">Blocks ryanodine receptors, and potassium channels.</text>
</comment>
<comment type="subcellular location">
    <subcellularLocation>
        <location evidence="1">Secreted</location>
    </subcellularLocation>
</comment>
<comment type="tissue specificity">
    <text>Expressed by the venom gland.</text>
</comment>
<comment type="PTM">
    <text evidence="1">Contains 8 disulfide bonds.</text>
</comment>
<comment type="similarity">
    <text evidence="3">Belongs to the CRISP family.</text>
</comment>
<name>CRVP9_VARVA</name>
<organism>
    <name type="scientific">Varanus varius</name>
    <name type="common">Lace monitor lizard</name>
    <name type="synonym">Lacerta varia</name>
    <dbReference type="NCBI Taxonomy" id="8559"/>
    <lineage>
        <taxon>Eukaryota</taxon>
        <taxon>Metazoa</taxon>
        <taxon>Chordata</taxon>
        <taxon>Craniata</taxon>
        <taxon>Vertebrata</taxon>
        <taxon>Euteleostomi</taxon>
        <taxon>Lepidosauria</taxon>
        <taxon>Squamata</taxon>
        <taxon>Bifurcata</taxon>
        <taxon>Unidentata</taxon>
        <taxon>Episquamata</taxon>
        <taxon>Toxicofera</taxon>
        <taxon>Anguimorpha</taxon>
        <taxon>Paleoanguimorpha</taxon>
        <taxon>Varanoidea</taxon>
        <taxon>Varanidae</taxon>
        <taxon>Varanus</taxon>
    </lineage>
</organism>
<dbReference type="EMBL" id="DQ139902">
    <property type="protein sequence ID" value="AAZ75608.1"/>
    <property type="molecule type" value="mRNA"/>
</dbReference>
<dbReference type="SMR" id="Q2XXP3"/>
<dbReference type="GO" id="GO:0005576">
    <property type="term" value="C:extracellular region"/>
    <property type="evidence" value="ECO:0007669"/>
    <property type="project" value="UniProtKB-SubCell"/>
</dbReference>
<dbReference type="GO" id="GO:0005246">
    <property type="term" value="F:calcium channel regulator activity"/>
    <property type="evidence" value="ECO:0007669"/>
    <property type="project" value="UniProtKB-KW"/>
</dbReference>
<dbReference type="GO" id="GO:0015459">
    <property type="term" value="F:potassium channel regulator activity"/>
    <property type="evidence" value="ECO:0007669"/>
    <property type="project" value="UniProtKB-KW"/>
</dbReference>
<dbReference type="GO" id="GO:0090729">
    <property type="term" value="F:toxin activity"/>
    <property type="evidence" value="ECO:0007669"/>
    <property type="project" value="UniProtKB-KW"/>
</dbReference>
<dbReference type="Gene3D" id="3.40.33.10">
    <property type="entry name" value="CAP"/>
    <property type="match status" value="1"/>
</dbReference>
<dbReference type="InterPro" id="IPR014044">
    <property type="entry name" value="CAP_dom"/>
</dbReference>
<dbReference type="InterPro" id="IPR035940">
    <property type="entry name" value="CAP_sf"/>
</dbReference>
<dbReference type="Pfam" id="PF00188">
    <property type="entry name" value="CAP"/>
    <property type="match status" value="1"/>
</dbReference>
<dbReference type="SUPFAM" id="SSF55797">
    <property type="entry name" value="PR-1-like"/>
    <property type="match status" value="1"/>
</dbReference>
<accession>Q2XXP3</accession>
<feature type="signal peptide" evidence="2">
    <location>
        <begin position="1"/>
        <end position="19"/>
    </location>
</feature>
<feature type="chain" id="PRO_0000380660" description="Cysteine-rich venom protein VAR9">
    <location>
        <begin position="20"/>
        <end position="102" status="greater than"/>
    </location>
</feature>
<feature type="domain" description="SCP">
    <location>
        <begin position="41"/>
        <end position="80"/>
    </location>
</feature>
<feature type="non-terminal residue">
    <location>
        <position position="102"/>
    </location>
</feature>
<proteinExistence type="evidence at transcript level"/>
<keyword id="KW-0108">Calcium channel impairing toxin</keyword>
<keyword id="KW-1015">Disulfide bond</keyword>
<keyword id="KW-0872">Ion channel impairing toxin</keyword>
<keyword id="KW-0528">Neurotoxin</keyword>
<keyword id="KW-0632">Potassium channel impairing toxin</keyword>
<keyword id="KW-0964">Secreted</keyword>
<keyword id="KW-0732">Signal</keyword>
<keyword id="KW-0800">Toxin</keyword>
<protein>
    <recommendedName>
        <fullName>Cysteine-rich venom protein VAR9</fullName>
        <shortName>CRVP</shortName>
    </recommendedName>
    <alternativeName>
        <fullName>Cysteine-rich secretory protein VAR9</fullName>
        <shortName>CRISP-VAR9</shortName>
    </alternativeName>
</protein>
<reference key="1">
    <citation type="journal article" date="2006" name="Nature">
        <title>Early evolution of the venom system in lizards and snakes.</title>
        <authorList>
            <person name="Fry B.G."/>
            <person name="Vidal N."/>
            <person name="Norman J.A."/>
            <person name="Vonk F.J."/>
            <person name="Scheib H."/>
            <person name="Ramjan S.F.R."/>
            <person name="Kuruppu S."/>
            <person name="Fung K."/>
            <person name="Blair Hedges S."/>
            <person name="Richardson M.K."/>
            <person name="Hodgson W.C."/>
            <person name="Ignjatovic V."/>
            <person name="Summerhayes R."/>
            <person name="Kochva E."/>
        </authorList>
    </citation>
    <scope>NUCLEOTIDE SEQUENCE [LARGE SCALE MRNA]</scope>
    <source>
        <tissue>Venom gland</tissue>
    </source>
</reference>
<evidence type="ECO:0000250" key="1"/>
<evidence type="ECO:0000255" key="2"/>
<evidence type="ECO:0000305" key="3"/>
<sequence>MILLKLYLTLAAILCQSRGMTSLDLDDLMTTNPEIQNEIINKHNDLRRTVDPPAKNMLKMSWDNIIAESAKRAALRCNYKEHTSIAERTIGGCGVWEKILSC</sequence>